<evidence type="ECO:0000255" key="1"/>
<evidence type="ECO:0000305" key="2"/>
<dbReference type="EMBL" id="AJ235273">
    <property type="protein sequence ID" value="CAA15298.1"/>
    <property type="molecule type" value="Genomic_DNA"/>
</dbReference>
<dbReference type="PIR" id="B71650">
    <property type="entry name" value="B71650"/>
</dbReference>
<dbReference type="RefSeq" id="NP_221222.1">
    <property type="nucleotide sequence ID" value="NC_000963.1"/>
</dbReference>
<dbReference type="RefSeq" id="WP_004596735.1">
    <property type="nucleotide sequence ID" value="NC_000963.1"/>
</dbReference>
<dbReference type="SMR" id="Q9ZC92"/>
<dbReference type="STRING" id="272947.gene:17555944"/>
<dbReference type="EnsemblBacteria" id="CAA15298">
    <property type="protein sequence ID" value="CAA15298"/>
    <property type="gene ID" value="CAA15298"/>
</dbReference>
<dbReference type="KEGG" id="rpr:RP875"/>
<dbReference type="PATRIC" id="fig|272947.5.peg.914"/>
<dbReference type="eggNOG" id="COG1434">
    <property type="taxonomic scope" value="Bacteria"/>
</dbReference>
<dbReference type="HOGENOM" id="CLU_1561703_0_0_5"/>
<dbReference type="OrthoDB" id="9812311at2"/>
<dbReference type="Proteomes" id="UP000002480">
    <property type="component" value="Chromosome"/>
</dbReference>
<dbReference type="GO" id="GO:0016020">
    <property type="term" value="C:membrane"/>
    <property type="evidence" value="ECO:0007669"/>
    <property type="project" value="UniProtKB-SubCell"/>
</dbReference>
<reference key="1">
    <citation type="journal article" date="1998" name="Nature">
        <title>The genome sequence of Rickettsia prowazekii and the origin of mitochondria.</title>
        <authorList>
            <person name="Andersson S.G.E."/>
            <person name="Zomorodipour A."/>
            <person name="Andersson J.O."/>
            <person name="Sicheritz-Ponten T."/>
            <person name="Alsmark U.C.M."/>
            <person name="Podowski R.M."/>
            <person name="Naeslund A.K."/>
            <person name="Eriksson A.-S."/>
            <person name="Winkler H.H."/>
            <person name="Kurland C.G."/>
        </authorList>
    </citation>
    <scope>NUCLEOTIDE SEQUENCE [LARGE SCALE GENOMIC DNA]</scope>
    <source>
        <strain>Madrid E</strain>
    </source>
</reference>
<keyword id="KW-0472">Membrane</keyword>
<keyword id="KW-1185">Reference proteome</keyword>
<keyword id="KW-0812">Transmembrane</keyword>
<keyword id="KW-1133">Transmembrane helix</keyword>
<accession>Q9ZC92</accession>
<name>Y875_RICPR</name>
<comment type="subcellular location">
    <subcellularLocation>
        <location evidence="2">Membrane</location>
        <topology evidence="2">Single-pass membrane protein</topology>
    </subcellularLocation>
</comment>
<gene>
    <name type="ordered locus">RP875</name>
</gene>
<proteinExistence type="predicted"/>
<organism>
    <name type="scientific">Rickettsia prowazekii (strain Madrid E)</name>
    <dbReference type="NCBI Taxonomy" id="272947"/>
    <lineage>
        <taxon>Bacteria</taxon>
        <taxon>Pseudomonadati</taxon>
        <taxon>Pseudomonadota</taxon>
        <taxon>Alphaproteobacteria</taxon>
        <taxon>Rickettsiales</taxon>
        <taxon>Rickettsiaceae</taxon>
        <taxon>Rickettsieae</taxon>
        <taxon>Rickettsia</taxon>
        <taxon>typhus group</taxon>
    </lineage>
</organism>
<sequence>MIRKFLLIILAIFTLWVGGFGYYLYLINSYKLNSNTTNAIIVFADGGHKIETCMALLKAGYAPILFITGIESTERFKNLLMKHNVIEQQVILAPNKIMSEEDNIKEAINFIVTYNLTLITLVEHNYNIPFMLNKLQKAIPSSNNVYIVPYPVFSKPKYDVLLKSYHRYLMSIVN</sequence>
<feature type="chain" id="PRO_0000101429" description="Uncharacterized protein RP875">
    <location>
        <begin position="1"/>
        <end position="174"/>
    </location>
</feature>
<feature type="transmembrane region" description="Helical" evidence="1">
    <location>
        <begin position="7"/>
        <end position="27"/>
    </location>
</feature>
<protein>
    <recommendedName>
        <fullName>Uncharacterized protein RP875</fullName>
    </recommendedName>
</protein>